<proteinExistence type="inferred from homology"/>
<keyword id="KW-0131">Cell cycle</keyword>
<keyword id="KW-0132">Cell division</keyword>
<keyword id="KW-0156">Chromatin regulator</keyword>
<keyword id="KW-0378">Hydrolase</keyword>
<keyword id="KW-0464">Manganese</keyword>
<keyword id="KW-0469">Meiosis</keyword>
<keyword id="KW-0479">Metal-binding</keyword>
<keyword id="KW-0498">Mitosis</keyword>
<keyword id="KW-0904">Protein phosphatase</keyword>
<keyword id="KW-1185">Reference proteome</keyword>
<protein>
    <recommendedName>
        <fullName>Serine/threonine-protein phosphatase PP1-alpha</fullName>
        <ecNumber>3.1.3.16</ecNumber>
    </recommendedName>
    <alternativeName>
        <fullName>Glc seven-like phosphatase 1</fullName>
    </alternativeName>
</protein>
<dbReference type="EC" id="3.1.3.16"/>
<dbReference type="EMBL" id="HE600998">
    <property type="protein sequence ID" value="CAP28943.1"/>
    <property type="molecule type" value="Genomic_DNA"/>
</dbReference>
<dbReference type="SMR" id="Q61JR3"/>
<dbReference type="FunCoup" id="Q61JR3">
    <property type="interactions" value="2597"/>
</dbReference>
<dbReference type="STRING" id="6238.Q61JR3"/>
<dbReference type="EnsemblMetazoa" id="CBG09676.1">
    <property type="protein sequence ID" value="CBG09676.1"/>
    <property type="gene ID" value="WBGene00031226"/>
</dbReference>
<dbReference type="KEGG" id="cbr:CBG_09676"/>
<dbReference type="CTD" id="8579162"/>
<dbReference type="WormBase" id="CBG09676">
    <property type="protein sequence ID" value="CBP02415"/>
    <property type="gene ID" value="WBGene00031226"/>
    <property type="gene designation" value="Cbr-gsp-1"/>
</dbReference>
<dbReference type="eggNOG" id="KOG0374">
    <property type="taxonomic scope" value="Eukaryota"/>
</dbReference>
<dbReference type="HOGENOM" id="CLU_004962_0_0_1"/>
<dbReference type="InParanoid" id="Q61JR3"/>
<dbReference type="OMA" id="TVQMSEN"/>
<dbReference type="Proteomes" id="UP000008549">
    <property type="component" value="Unassembled WGS sequence"/>
</dbReference>
<dbReference type="GO" id="GO:0005737">
    <property type="term" value="C:cytoplasm"/>
    <property type="evidence" value="ECO:0000318"/>
    <property type="project" value="GO_Central"/>
</dbReference>
<dbReference type="GO" id="GO:0005634">
    <property type="term" value="C:nucleus"/>
    <property type="evidence" value="ECO:0000318"/>
    <property type="project" value="GO_Central"/>
</dbReference>
<dbReference type="GO" id="GO:0046872">
    <property type="term" value="F:metal ion binding"/>
    <property type="evidence" value="ECO:0007669"/>
    <property type="project" value="UniProtKB-KW"/>
</dbReference>
<dbReference type="GO" id="GO:0004722">
    <property type="term" value="F:protein serine/threonine phosphatase activity"/>
    <property type="evidence" value="ECO:0000318"/>
    <property type="project" value="GO_Central"/>
</dbReference>
<dbReference type="GO" id="GO:0051301">
    <property type="term" value="P:cell division"/>
    <property type="evidence" value="ECO:0007669"/>
    <property type="project" value="UniProtKB-KW"/>
</dbReference>
<dbReference type="GO" id="GO:0006325">
    <property type="term" value="P:chromatin organization"/>
    <property type="evidence" value="ECO:0007669"/>
    <property type="project" value="UniProtKB-KW"/>
</dbReference>
<dbReference type="GO" id="GO:0051321">
    <property type="term" value="P:meiotic cell cycle"/>
    <property type="evidence" value="ECO:0007669"/>
    <property type="project" value="UniProtKB-KW"/>
</dbReference>
<dbReference type="GO" id="GO:0010628">
    <property type="term" value="P:positive regulation of gene expression"/>
    <property type="evidence" value="ECO:0007669"/>
    <property type="project" value="EnsemblMetazoa"/>
</dbReference>
<dbReference type="CDD" id="cd07414">
    <property type="entry name" value="MPP_PP1_PPKL"/>
    <property type="match status" value="1"/>
</dbReference>
<dbReference type="FunFam" id="3.60.21.10:FF:000007">
    <property type="entry name" value="Serine/threonine-protein phosphatase"/>
    <property type="match status" value="1"/>
</dbReference>
<dbReference type="Gene3D" id="3.60.21.10">
    <property type="match status" value="1"/>
</dbReference>
<dbReference type="InterPro" id="IPR004843">
    <property type="entry name" value="Calcineurin-like_PHP_ApaH"/>
</dbReference>
<dbReference type="InterPro" id="IPR029052">
    <property type="entry name" value="Metallo-depent_PP-like"/>
</dbReference>
<dbReference type="InterPro" id="IPR050341">
    <property type="entry name" value="PP1_catalytic_subunit"/>
</dbReference>
<dbReference type="InterPro" id="IPR006186">
    <property type="entry name" value="Ser/Thr-sp_prot-phosphatase"/>
</dbReference>
<dbReference type="InterPro" id="IPR031675">
    <property type="entry name" value="STPPase_N"/>
</dbReference>
<dbReference type="PANTHER" id="PTHR11668">
    <property type="entry name" value="SERINE/THREONINE PROTEIN PHOSPHATASE"/>
    <property type="match status" value="1"/>
</dbReference>
<dbReference type="PANTHER" id="PTHR11668:SF510">
    <property type="entry name" value="SERINE_THREONINE-PROTEIN PHOSPHATASE"/>
    <property type="match status" value="1"/>
</dbReference>
<dbReference type="Pfam" id="PF00149">
    <property type="entry name" value="Metallophos"/>
    <property type="match status" value="1"/>
</dbReference>
<dbReference type="Pfam" id="PF16891">
    <property type="entry name" value="STPPase_N"/>
    <property type="match status" value="1"/>
</dbReference>
<dbReference type="PRINTS" id="PR00114">
    <property type="entry name" value="STPHPHTASE"/>
</dbReference>
<dbReference type="SMART" id="SM00156">
    <property type="entry name" value="PP2Ac"/>
    <property type="match status" value="1"/>
</dbReference>
<dbReference type="SUPFAM" id="SSF56300">
    <property type="entry name" value="Metallo-dependent phosphatases"/>
    <property type="match status" value="1"/>
</dbReference>
<dbReference type="PROSITE" id="PS00125">
    <property type="entry name" value="SER_THR_PHOSPHATASE"/>
    <property type="match status" value="1"/>
</dbReference>
<sequence>MSNDGDLNIDNLITRLLEVRGCRPGKPVTMSEAEIRALCHKSREIFLSQPILLELEAPLKICGDIHGQYNDLLRLFEYGGFPPEANYLFLGDYVDRGKQSLETICLLLAYKVKYPENFFLLRGNHECASINRIYGFYDECKRRFSIKLWKTFTDCFNCLPIAALIDEKIFCCHGGLSPDLQNMEQIRRVMRPTDVPDTGLLCDLLWSDPDKDVTGWGENDRGVSFTFGPDVVAKFLNRHDLDLICRAHQVVEDGYEFFAKRQLVTLFSAPNYCGEFDNAGGMMSVDETLMCSFQILKPSEKKAKYQYQGMNSGRPAVGGGRPGTTAGKK</sequence>
<name>GLC7A_CAEBR</name>
<organism>
    <name type="scientific">Caenorhabditis briggsae</name>
    <dbReference type="NCBI Taxonomy" id="6238"/>
    <lineage>
        <taxon>Eukaryota</taxon>
        <taxon>Metazoa</taxon>
        <taxon>Ecdysozoa</taxon>
        <taxon>Nematoda</taxon>
        <taxon>Chromadorea</taxon>
        <taxon>Rhabditida</taxon>
        <taxon>Rhabditina</taxon>
        <taxon>Rhabditomorpha</taxon>
        <taxon>Rhabditoidea</taxon>
        <taxon>Rhabditidae</taxon>
        <taxon>Peloderinae</taxon>
        <taxon>Caenorhabditis</taxon>
    </lineage>
</organism>
<comment type="function">
    <text evidence="3">Serine/threonine-protein phosphatase which antagonizes the function of air-2 in the regulation of chromosome cohesion. Dephosphorylates histone H3 at 'Ser-10'. Dephosphorylates translation initiation factor eIF2alpha. Involved in the activation of chloride channel clh-3 during cell swelling and meiotic maturation.</text>
</comment>
<comment type="catalytic activity">
    <reaction evidence="2">
        <text>O-phospho-L-seryl-[protein] + H2O = L-seryl-[protein] + phosphate</text>
        <dbReference type="Rhea" id="RHEA:20629"/>
        <dbReference type="Rhea" id="RHEA-COMP:9863"/>
        <dbReference type="Rhea" id="RHEA-COMP:11604"/>
        <dbReference type="ChEBI" id="CHEBI:15377"/>
        <dbReference type="ChEBI" id="CHEBI:29999"/>
        <dbReference type="ChEBI" id="CHEBI:43474"/>
        <dbReference type="ChEBI" id="CHEBI:83421"/>
        <dbReference type="EC" id="3.1.3.16"/>
    </reaction>
</comment>
<comment type="catalytic activity">
    <reaction evidence="2">
        <text>O-phospho-L-threonyl-[protein] + H2O = L-threonyl-[protein] + phosphate</text>
        <dbReference type="Rhea" id="RHEA:47004"/>
        <dbReference type="Rhea" id="RHEA-COMP:11060"/>
        <dbReference type="Rhea" id="RHEA-COMP:11605"/>
        <dbReference type="ChEBI" id="CHEBI:15377"/>
        <dbReference type="ChEBI" id="CHEBI:30013"/>
        <dbReference type="ChEBI" id="CHEBI:43474"/>
        <dbReference type="ChEBI" id="CHEBI:61977"/>
        <dbReference type="EC" id="3.1.3.16"/>
    </reaction>
</comment>
<comment type="cofactor">
    <cofactor evidence="2">
        <name>Mn(2+)</name>
        <dbReference type="ChEBI" id="CHEBI:29035"/>
    </cofactor>
    <text evidence="2">Binds 2 manganese ions per subunit.</text>
</comment>
<comment type="subunit">
    <text evidence="3">Interacts with lab-1; the interaction is direct. Interacts with knl-1; the interaction is direct.</text>
</comment>
<comment type="similarity">
    <text evidence="5">Belongs to the PPP phosphatase family. PP-1 subfamily.</text>
</comment>
<evidence type="ECO:0000250" key="1">
    <source>
        <dbReference type="UniProtKB" id="P36873"/>
    </source>
</evidence>
<evidence type="ECO:0000250" key="2">
    <source>
        <dbReference type="UniProtKB" id="P62136"/>
    </source>
</evidence>
<evidence type="ECO:0000250" key="3">
    <source>
        <dbReference type="UniProtKB" id="Q27497"/>
    </source>
</evidence>
<evidence type="ECO:0000256" key="4">
    <source>
        <dbReference type="SAM" id="MobiDB-lite"/>
    </source>
</evidence>
<evidence type="ECO:0000305" key="5"/>
<accession>Q61JR3</accession>
<accession>A8X8I2</accession>
<feature type="chain" id="PRO_0000268636" description="Serine/threonine-protein phosphatase PP1-alpha">
    <location>
        <begin position="1"/>
        <end position="329"/>
    </location>
</feature>
<feature type="region of interest" description="Disordered" evidence="4">
    <location>
        <begin position="309"/>
        <end position="329"/>
    </location>
</feature>
<feature type="active site" description="Proton donor" evidence="1">
    <location>
        <position position="125"/>
    </location>
</feature>
<feature type="binding site" evidence="2">
    <location>
        <position position="64"/>
    </location>
    <ligand>
        <name>Mn(2+)</name>
        <dbReference type="ChEBI" id="CHEBI:29035"/>
        <label>1</label>
    </ligand>
</feature>
<feature type="binding site" evidence="2">
    <location>
        <position position="64"/>
    </location>
    <ligand>
        <name>Mn(2+)</name>
        <dbReference type="ChEBI" id="CHEBI:29035"/>
        <label>2</label>
    </ligand>
</feature>
<feature type="binding site" evidence="2">
    <location>
        <position position="66"/>
    </location>
    <ligand>
        <name>Mn(2+)</name>
        <dbReference type="ChEBI" id="CHEBI:29035"/>
        <label>1</label>
    </ligand>
</feature>
<feature type="binding site" evidence="2">
    <location>
        <position position="92"/>
    </location>
    <ligand>
        <name>Mn(2+)</name>
        <dbReference type="ChEBI" id="CHEBI:29035"/>
        <label>1</label>
    </ligand>
</feature>
<feature type="binding site" evidence="2">
    <location>
        <position position="92"/>
    </location>
    <ligand>
        <name>Mn(2+)</name>
        <dbReference type="ChEBI" id="CHEBI:29035"/>
        <label>2</label>
    </ligand>
</feature>
<feature type="binding site" evidence="2">
    <location>
        <position position="124"/>
    </location>
    <ligand>
        <name>Mn(2+)</name>
        <dbReference type="ChEBI" id="CHEBI:29035"/>
        <label>2</label>
    </ligand>
</feature>
<feature type="binding site" evidence="2">
    <location>
        <position position="173"/>
    </location>
    <ligand>
        <name>Mn(2+)</name>
        <dbReference type="ChEBI" id="CHEBI:29035"/>
        <label>2</label>
    </ligand>
</feature>
<feature type="binding site" evidence="2">
    <location>
        <position position="248"/>
    </location>
    <ligand>
        <name>Mn(2+)</name>
        <dbReference type="ChEBI" id="CHEBI:29035"/>
        <label>2</label>
    </ligand>
</feature>
<reference key="1">
    <citation type="journal article" date="2003" name="PLoS Biol.">
        <title>The genome sequence of Caenorhabditis briggsae: a platform for comparative genomics.</title>
        <authorList>
            <person name="Stein L.D."/>
            <person name="Bao Z."/>
            <person name="Blasiar D."/>
            <person name="Blumenthal T."/>
            <person name="Brent M.R."/>
            <person name="Chen N."/>
            <person name="Chinwalla A."/>
            <person name="Clarke L."/>
            <person name="Clee C."/>
            <person name="Coghlan A."/>
            <person name="Coulson A."/>
            <person name="D'Eustachio P."/>
            <person name="Fitch D.H.A."/>
            <person name="Fulton L.A."/>
            <person name="Fulton R.E."/>
            <person name="Griffiths-Jones S."/>
            <person name="Harris T.W."/>
            <person name="Hillier L.W."/>
            <person name="Kamath R."/>
            <person name="Kuwabara P.E."/>
            <person name="Mardis E.R."/>
            <person name="Marra M.A."/>
            <person name="Miner T.L."/>
            <person name="Minx P."/>
            <person name="Mullikin J.C."/>
            <person name="Plumb R.W."/>
            <person name="Rogers J."/>
            <person name="Schein J.E."/>
            <person name="Sohrmann M."/>
            <person name="Spieth J."/>
            <person name="Stajich J.E."/>
            <person name="Wei C."/>
            <person name="Willey D."/>
            <person name="Wilson R.K."/>
            <person name="Durbin R.M."/>
            <person name="Waterston R.H."/>
        </authorList>
    </citation>
    <scope>NUCLEOTIDE SEQUENCE [LARGE SCALE GENOMIC DNA]</scope>
    <source>
        <strain>AF16</strain>
    </source>
</reference>
<gene>
    <name type="primary">gsp-1</name>
    <name type="ORF">CBG09676</name>
</gene>